<reference key="1">
    <citation type="journal article" date="1997" name="Nature">
        <title>Molecular basis of symbiosis between Rhizobium and legumes.</title>
        <authorList>
            <person name="Freiberg C.A."/>
            <person name="Fellay R."/>
            <person name="Bairoch A."/>
            <person name="Broughton W.J."/>
            <person name="Rosenthal A."/>
            <person name="Perret X."/>
        </authorList>
    </citation>
    <scope>NUCLEOTIDE SEQUENCE [LARGE SCALE GENOMIC DNA]</scope>
    <source>
        <strain>NBRC 101917 / NGR234</strain>
    </source>
</reference>
<reference key="2">
    <citation type="journal article" date="2009" name="Appl. Environ. Microbiol.">
        <title>Rhizobium sp. strain NGR234 possesses a remarkable number of secretion systems.</title>
        <authorList>
            <person name="Schmeisser C."/>
            <person name="Liesegang H."/>
            <person name="Krysciak D."/>
            <person name="Bakkou N."/>
            <person name="Le Quere A."/>
            <person name="Wollherr A."/>
            <person name="Heinemeyer I."/>
            <person name="Morgenstern B."/>
            <person name="Pommerening-Roeser A."/>
            <person name="Flores M."/>
            <person name="Palacios R."/>
            <person name="Brenner S."/>
            <person name="Gottschalk G."/>
            <person name="Schmitz R.A."/>
            <person name="Broughton W.J."/>
            <person name="Perret X."/>
            <person name="Strittmatter A.W."/>
            <person name="Streit W.R."/>
        </authorList>
    </citation>
    <scope>NUCLEOTIDE SEQUENCE [LARGE SCALE GENOMIC DNA]</scope>
    <source>
        <strain>NBRC 101917 / NGR234</strain>
    </source>
</reference>
<geneLocation type="plasmid">
    <name>sym pNGR234a</name>
</geneLocation>
<keyword id="KW-0249">Electron transport</keyword>
<keyword id="KW-0349">Heme</keyword>
<keyword id="KW-0408">Iron</keyword>
<keyword id="KW-0479">Metal-binding</keyword>
<keyword id="KW-0614">Plasmid</keyword>
<keyword id="KW-1185">Reference proteome</keyword>
<keyword id="KW-0813">Transport</keyword>
<evidence type="ECO:0000255" key="1">
    <source>
        <dbReference type="PROSITE-ProRule" id="PRU00433"/>
    </source>
</evidence>
<dbReference type="EMBL" id="U00090">
    <property type="protein sequence ID" value="AAB91708.1"/>
    <property type="molecule type" value="Genomic_DNA"/>
</dbReference>
<dbReference type="RefSeq" id="NP_443906.1">
    <property type="nucleotide sequence ID" value="NC_000914.2"/>
</dbReference>
<dbReference type="KEGG" id="rhi:NGR_a03200"/>
<dbReference type="PATRIC" id="fig|394.7.peg.330"/>
<dbReference type="eggNOG" id="COG1858">
    <property type="taxonomic scope" value="Bacteria"/>
</dbReference>
<dbReference type="HOGENOM" id="CLU_041654_0_0_5"/>
<dbReference type="OrthoDB" id="417271at2"/>
<dbReference type="Proteomes" id="UP000001054">
    <property type="component" value="Plasmid pNGR234a"/>
</dbReference>
<dbReference type="GO" id="GO:0004130">
    <property type="term" value="F:cytochrome-c peroxidase activity"/>
    <property type="evidence" value="ECO:0007669"/>
    <property type="project" value="TreeGrafter"/>
</dbReference>
<dbReference type="GO" id="GO:0009055">
    <property type="term" value="F:electron transfer activity"/>
    <property type="evidence" value="ECO:0007669"/>
    <property type="project" value="InterPro"/>
</dbReference>
<dbReference type="GO" id="GO:0020037">
    <property type="term" value="F:heme binding"/>
    <property type="evidence" value="ECO:0007669"/>
    <property type="project" value="InterPro"/>
</dbReference>
<dbReference type="GO" id="GO:0046872">
    <property type="term" value="F:metal ion binding"/>
    <property type="evidence" value="ECO:0007669"/>
    <property type="project" value="UniProtKB-KW"/>
</dbReference>
<dbReference type="Gene3D" id="1.10.760.10">
    <property type="entry name" value="Cytochrome c-like domain"/>
    <property type="match status" value="1"/>
</dbReference>
<dbReference type="InterPro" id="IPR009056">
    <property type="entry name" value="Cyt_c-like_dom"/>
</dbReference>
<dbReference type="InterPro" id="IPR036909">
    <property type="entry name" value="Cyt_c-like_dom_sf"/>
</dbReference>
<dbReference type="InterPro" id="IPR051395">
    <property type="entry name" value="Cytochrome_c_Peroxidase/MauG"/>
</dbReference>
<dbReference type="PANTHER" id="PTHR30600:SF9">
    <property type="entry name" value="BLR7738 PROTEIN"/>
    <property type="match status" value="1"/>
</dbReference>
<dbReference type="PANTHER" id="PTHR30600">
    <property type="entry name" value="CYTOCHROME C PEROXIDASE-RELATED"/>
    <property type="match status" value="1"/>
</dbReference>
<dbReference type="Pfam" id="PF21419">
    <property type="entry name" value="RoxA-like_Cyt-c"/>
    <property type="match status" value="1"/>
</dbReference>
<dbReference type="SUPFAM" id="SSF46626">
    <property type="entry name" value="Cytochrome c"/>
    <property type="match status" value="1"/>
</dbReference>
<dbReference type="PROSITE" id="PS51007">
    <property type="entry name" value="CYTC"/>
    <property type="match status" value="1"/>
</dbReference>
<gene>
    <name type="ordered locus">NGR_a03200</name>
    <name type="ORF">y4iM</name>
</gene>
<organism>
    <name type="scientific">Sinorhizobium fredii (strain NBRC 101917 / NGR234)</name>
    <dbReference type="NCBI Taxonomy" id="394"/>
    <lineage>
        <taxon>Bacteria</taxon>
        <taxon>Pseudomonadati</taxon>
        <taxon>Pseudomonadota</taxon>
        <taxon>Alphaproteobacteria</taxon>
        <taxon>Hyphomicrobiales</taxon>
        <taxon>Rhizobiaceae</taxon>
        <taxon>Sinorhizobium/Ensifer group</taxon>
        <taxon>Sinorhizobium</taxon>
    </lineage>
</organism>
<feature type="chain" id="PRO_0000108452" description="Uncharacterized protein y4iM">
    <location>
        <begin position="1"/>
        <end position="432"/>
    </location>
</feature>
<feature type="domain" description="Cytochrome c" evidence="1">
    <location>
        <begin position="223"/>
        <end position="432"/>
    </location>
</feature>
<feature type="binding site" description="covalent" evidence="1">
    <location>
        <position position="236"/>
    </location>
    <ligand>
        <name>heme c</name>
        <dbReference type="ChEBI" id="CHEBI:61717"/>
    </ligand>
</feature>
<feature type="binding site" description="covalent" evidence="1">
    <location>
        <position position="239"/>
    </location>
    <ligand>
        <name>heme c</name>
        <dbReference type="ChEBI" id="CHEBI:61717"/>
    </ligand>
</feature>
<feature type="binding site" description="axial binding residue" evidence="1">
    <location>
        <position position="240"/>
    </location>
    <ligand>
        <name>heme c</name>
        <dbReference type="ChEBI" id="CHEBI:61717"/>
    </ligand>
    <ligandPart>
        <name>Fe</name>
        <dbReference type="ChEBI" id="CHEBI:18248"/>
    </ligandPart>
</feature>
<proteinExistence type="predicted"/>
<accession>P55496</accession>
<sequence>MTAYFSTPEKIQASAERIAAIIDAKPNGYFYPPAYFGKPGFLNFTPNVEVAQRAALKKNLPGILATFACGTVQREAGIELQKQTSYGNWNGPGFSGFSTGQQDGSGDLIFQLLVAKAMPPGECQPNAAGGLNRNFDATAFKNSSHPEIPPFATITDIPSVWNQQERSLAQWDGSVKMAFWRNIAAQLPIVGDPSKIDLVNTGVVANFLDGLPPAAYPFDVDMASAVRGEALFKDNCAVCHKPHNDTIYQFRDIGTDMNRAAVLNDAAFHLFAAGFQASCHDQDFLYRSPTGEEVRPCRMAGEDVITARTTPAVQGYVAEVLDGVWARAPYLHNGSIPTLYHLLVPASRPEQFLRGAIQYDTAKVGYVLDPAVTGLVADTSPTLTIYDRRKDGHAGTGHDRNLVVDGKLRRLDWSGPQYADALKDLIEYLKTR</sequence>
<protein>
    <recommendedName>
        <fullName>Uncharacterized protein y4iM</fullName>
    </recommendedName>
</protein>
<name>Y4IM_SINFN</name>